<name>RS19_MARN8</name>
<protein>
    <recommendedName>
        <fullName evidence="1">Small ribosomal subunit protein uS19</fullName>
    </recommendedName>
    <alternativeName>
        <fullName evidence="2">30S ribosomal protein S19</fullName>
    </alternativeName>
</protein>
<comment type="function">
    <text evidence="1">Protein S19 forms a complex with S13 that binds strongly to the 16S ribosomal RNA.</text>
</comment>
<comment type="similarity">
    <text evidence="1">Belongs to the universal ribosomal protein uS19 family.</text>
</comment>
<dbReference type="EMBL" id="CP000514">
    <property type="protein sequence ID" value="ABM17820.1"/>
    <property type="molecule type" value="Genomic_DNA"/>
</dbReference>
<dbReference type="RefSeq" id="WP_007154011.1">
    <property type="nucleotide sequence ID" value="NC_008740.1"/>
</dbReference>
<dbReference type="SMR" id="A1TYK1"/>
<dbReference type="STRING" id="351348.Maqu_0723"/>
<dbReference type="GeneID" id="90606360"/>
<dbReference type="KEGG" id="maq:Maqu_0723"/>
<dbReference type="eggNOG" id="COG0185">
    <property type="taxonomic scope" value="Bacteria"/>
</dbReference>
<dbReference type="HOGENOM" id="CLU_144911_0_1_6"/>
<dbReference type="OrthoDB" id="9797833at2"/>
<dbReference type="Proteomes" id="UP000000998">
    <property type="component" value="Chromosome"/>
</dbReference>
<dbReference type="GO" id="GO:0005737">
    <property type="term" value="C:cytoplasm"/>
    <property type="evidence" value="ECO:0007669"/>
    <property type="project" value="UniProtKB-ARBA"/>
</dbReference>
<dbReference type="GO" id="GO:0015935">
    <property type="term" value="C:small ribosomal subunit"/>
    <property type="evidence" value="ECO:0007669"/>
    <property type="project" value="InterPro"/>
</dbReference>
<dbReference type="GO" id="GO:0019843">
    <property type="term" value="F:rRNA binding"/>
    <property type="evidence" value="ECO:0007669"/>
    <property type="project" value="UniProtKB-UniRule"/>
</dbReference>
<dbReference type="GO" id="GO:0003735">
    <property type="term" value="F:structural constituent of ribosome"/>
    <property type="evidence" value="ECO:0007669"/>
    <property type="project" value="InterPro"/>
</dbReference>
<dbReference type="GO" id="GO:0000028">
    <property type="term" value="P:ribosomal small subunit assembly"/>
    <property type="evidence" value="ECO:0007669"/>
    <property type="project" value="TreeGrafter"/>
</dbReference>
<dbReference type="GO" id="GO:0006412">
    <property type="term" value="P:translation"/>
    <property type="evidence" value="ECO:0007669"/>
    <property type="project" value="UniProtKB-UniRule"/>
</dbReference>
<dbReference type="FunFam" id="3.30.860.10:FF:000001">
    <property type="entry name" value="30S ribosomal protein S19"/>
    <property type="match status" value="1"/>
</dbReference>
<dbReference type="Gene3D" id="3.30.860.10">
    <property type="entry name" value="30s Ribosomal Protein S19, Chain A"/>
    <property type="match status" value="1"/>
</dbReference>
<dbReference type="HAMAP" id="MF_00531">
    <property type="entry name" value="Ribosomal_uS19"/>
    <property type="match status" value="1"/>
</dbReference>
<dbReference type="InterPro" id="IPR002222">
    <property type="entry name" value="Ribosomal_uS19"/>
</dbReference>
<dbReference type="InterPro" id="IPR005732">
    <property type="entry name" value="Ribosomal_uS19_bac-type"/>
</dbReference>
<dbReference type="InterPro" id="IPR020934">
    <property type="entry name" value="Ribosomal_uS19_CS"/>
</dbReference>
<dbReference type="InterPro" id="IPR023575">
    <property type="entry name" value="Ribosomal_uS19_SF"/>
</dbReference>
<dbReference type="NCBIfam" id="TIGR01050">
    <property type="entry name" value="rpsS_bact"/>
    <property type="match status" value="1"/>
</dbReference>
<dbReference type="PANTHER" id="PTHR11880">
    <property type="entry name" value="RIBOSOMAL PROTEIN S19P FAMILY MEMBER"/>
    <property type="match status" value="1"/>
</dbReference>
<dbReference type="PANTHER" id="PTHR11880:SF8">
    <property type="entry name" value="SMALL RIBOSOMAL SUBUNIT PROTEIN US19M"/>
    <property type="match status" value="1"/>
</dbReference>
<dbReference type="Pfam" id="PF00203">
    <property type="entry name" value="Ribosomal_S19"/>
    <property type="match status" value="1"/>
</dbReference>
<dbReference type="PIRSF" id="PIRSF002144">
    <property type="entry name" value="Ribosomal_S19"/>
    <property type="match status" value="1"/>
</dbReference>
<dbReference type="PRINTS" id="PR00975">
    <property type="entry name" value="RIBOSOMALS19"/>
</dbReference>
<dbReference type="SUPFAM" id="SSF54570">
    <property type="entry name" value="Ribosomal protein S19"/>
    <property type="match status" value="1"/>
</dbReference>
<dbReference type="PROSITE" id="PS00323">
    <property type="entry name" value="RIBOSOMAL_S19"/>
    <property type="match status" value="1"/>
</dbReference>
<accession>A1TYK1</accession>
<organism>
    <name type="scientific">Marinobacter nauticus (strain ATCC 700491 / DSM 11845 / VT8)</name>
    <name type="common">Marinobacter aquaeolei</name>
    <dbReference type="NCBI Taxonomy" id="351348"/>
    <lineage>
        <taxon>Bacteria</taxon>
        <taxon>Pseudomonadati</taxon>
        <taxon>Pseudomonadota</taxon>
        <taxon>Gammaproteobacteria</taxon>
        <taxon>Pseudomonadales</taxon>
        <taxon>Marinobacteraceae</taxon>
        <taxon>Marinobacter</taxon>
    </lineage>
</organism>
<reference key="1">
    <citation type="journal article" date="2011" name="Appl. Environ. Microbiol.">
        <title>Genomic potential of Marinobacter aquaeolei, a biogeochemical 'opportunitroph'.</title>
        <authorList>
            <person name="Singer E."/>
            <person name="Webb E.A."/>
            <person name="Nelson W.C."/>
            <person name="Heidelberg J.F."/>
            <person name="Ivanova N."/>
            <person name="Pati A."/>
            <person name="Edwards K.J."/>
        </authorList>
    </citation>
    <scope>NUCLEOTIDE SEQUENCE [LARGE SCALE GENOMIC DNA]</scope>
    <source>
        <strain>ATCC 700491 / DSM 11845 / VT8</strain>
    </source>
</reference>
<feature type="chain" id="PRO_1000051073" description="Small ribosomal subunit protein uS19">
    <location>
        <begin position="1"/>
        <end position="91"/>
    </location>
</feature>
<evidence type="ECO:0000255" key="1">
    <source>
        <dbReference type="HAMAP-Rule" id="MF_00531"/>
    </source>
</evidence>
<evidence type="ECO:0000305" key="2"/>
<proteinExistence type="inferred from homology"/>
<sequence length="91" mass="10277">MPRSLKKGPFIDLHLLKKVEAALEANDKRPIKTWSRRSTVFPEMVGLTIAVHNGKQHVPVYVTEDMVGHKLGEFAATRTYRGHAADKKAKR</sequence>
<keyword id="KW-0687">Ribonucleoprotein</keyword>
<keyword id="KW-0689">Ribosomal protein</keyword>
<keyword id="KW-0694">RNA-binding</keyword>
<keyword id="KW-0699">rRNA-binding</keyword>
<gene>
    <name evidence="1" type="primary">rpsS</name>
    <name type="ordered locus">Maqu_0723</name>
</gene>